<keyword id="KW-0067">ATP-binding</keyword>
<keyword id="KW-0347">Helicase</keyword>
<keyword id="KW-0378">Hydrolase</keyword>
<keyword id="KW-0547">Nucleotide-binding</keyword>
<keyword id="KW-0539">Nucleus</keyword>
<keyword id="KW-1185">Reference proteome</keyword>
<keyword id="KW-0690">Ribosome biogenesis</keyword>
<keyword id="KW-0694">RNA-binding</keyword>
<keyword id="KW-0698">rRNA processing</keyword>
<protein>
    <recommendedName>
        <fullName>ATP-dependent RNA helicase ROK1</fullName>
        <ecNumber>3.6.4.13</ecNumber>
    </recommendedName>
</protein>
<reference key="1">
    <citation type="journal article" date="2007" name="Nat. Biotechnol.">
        <title>Genome sequence of the lignocellulose-bioconverting and xylose-fermenting yeast Pichia stipitis.</title>
        <authorList>
            <person name="Jeffries T.W."/>
            <person name="Grigoriev I.V."/>
            <person name="Grimwood J."/>
            <person name="Laplaza J.M."/>
            <person name="Aerts A."/>
            <person name="Salamov A."/>
            <person name="Schmutz J."/>
            <person name="Lindquist E."/>
            <person name="Dehal P."/>
            <person name="Shapiro H."/>
            <person name="Jin Y.-S."/>
            <person name="Passoth V."/>
            <person name="Richardson P.M."/>
        </authorList>
    </citation>
    <scope>NUCLEOTIDE SEQUENCE [LARGE SCALE GENOMIC DNA]</scope>
    <source>
        <strain>ATCC 58785 / CBS 6054 / NBRC 10063 / NRRL Y-11545</strain>
    </source>
</reference>
<proteinExistence type="inferred from homology"/>
<sequence>MDIFRILSRGASLKKSKDVTTDYALPSAKQQQYEQHKEDTLQHQVDKEIDFFHTKKHNSSKSFDSTDSKHTKEEKKEKKEDEEAPPLEIQTVEDSIKLRKANHSKVTGEDIPLPIGSFQDMIGRFRLDSKLLSNLLEAEFVEPTAIQCESLPISLSGRDLIACAPTGSGKTLAFLIPLIQSLLVSSKGRPKNYGITGLVISPTNELAIQIFQELQILTRGKKLNVAILSKQLANKLNNDIVKASKYDIIVSTPLRLIDIVKNEKVDLSKVEQLVIDEADKLFDQGFVEQTDDILSHCTYTKIRKSMFSATIPSGVEEMAHSIMRDPIRVIIGRKEAASNTIDQKLVFTGSEEGKLLAIRQMIQEGEFKPPIIIFLQSIHRAKALFHELLYDKLNVDVIHAERTPKQREEVIKRFKNGDIWVLITTDVLARGVDFKGVNMVINYDVPQTAQAYVHRIGRTGRGGKAGRAVTFFTKEDDQAVKPIINVMKQSGCEAGFSGWMENMTKMSKNEKKKVKHKEIDRKDISTVPKLVKHKRKQREQMIEASKKRKQEETRNALQ</sequence>
<gene>
    <name type="primary">ROK1</name>
    <name type="ORF">PICST_81007</name>
</gene>
<organism>
    <name type="scientific">Scheffersomyces stipitis (strain ATCC 58785 / CBS 6054 / NBRC 10063 / NRRL Y-11545)</name>
    <name type="common">Yeast</name>
    <name type="synonym">Pichia stipitis</name>
    <dbReference type="NCBI Taxonomy" id="322104"/>
    <lineage>
        <taxon>Eukaryota</taxon>
        <taxon>Fungi</taxon>
        <taxon>Dikarya</taxon>
        <taxon>Ascomycota</taxon>
        <taxon>Saccharomycotina</taxon>
        <taxon>Pichiomycetes</taxon>
        <taxon>Debaryomycetaceae</taxon>
        <taxon>Scheffersomyces</taxon>
    </lineage>
</organism>
<feature type="chain" id="PRO_0000285153" description="ATP-dependent RNA helicase ROK1">
    <location>
        <begin position="1"/>
        <end position="558"/>
    </location>
</feature>
<feature type="domain" description="Helicase ATP-binding" evidence="2">
    <location>
        <begin position="151"/>
        <end position="329"/>
    </location>
</feature>
<feature type="domain" description="Helicase C-terminal" evidence="3">
    <location>
        <begin position="340"/>
        <end position="504"/>
    </location>
</feature>
<feature type="region of interest" description="Disordered" evidence="4">
    <location>
        <begin position="26"/>
        <end position="91"/>
    </location>
</feature>
<feature type="region of interest" description="Disordered" evidence="4">
    <location>
        <begin position="509"/>
        <end position="558"/>
    </location>
</feature>
<feature type="short sequence motif" description="Q motif">
    <location>
        <begin position="120"/>
        <end position="148"/>
    </location>
</feature>
<feature type="short sequence motif" description="DEAD box">
    <location>
        <begin position="276"/>
        <end position="279"/>
    </location>
</feature>
<feature type="compositionally biased region" description="Basic and acidic residues" evidence="4">
    <location>
        <begin position="34"/>
        <end position="53"/>
    </location>
</feature>
<feature type="compositionally biased region" description="Basic and acidic residues" evidence="4">
    <location>
        <begin position="64"/>
        <end position="81"/>
    </location>
</feature>
<feature type="compositionally biased region" description="Basic and acidic residues" evidence="4">
    <location>
        <begin position="538"/>
        <end position="558"/>
    </location>
</feature>
<feature type="binding site" evidence="2">
    <location>
        <begin position="164"/>
        <end position="171"/>
    </location>
    <ligand>
        <name>ATP</name>
        <dbReference type="ChEBI" id="CHEBI:30616"/>
    </ligand>
</feature>
<accession>A3GHW9</accession>
<name>ROK1_PICST</name>
<evidence type="ECO:0000250" key="1"/>
<evidence type="ECO:0000255" key="2">
    <source>
        <dbReference type="PROSITE-ProRule" id="PRU00541"/>
    </source>
</evidence>
<evidence type="ECO:0000255" key="3">
    <source>
        <dbReference type="PROSITE-ProRule" id="PRU00542"/>
    </source>
</evidence>
<evidence type="ECO:0000256" key="4">
    <source>
        <dbReference type="SAM" id="MobiDB-lite"/>
    </source>
</evidence>
<evidence type="ECO:0000305" key="5"/>
<dbReference type="EC" id="3.6.4.13"/>
<dbReference type="EMBL" id="AAVQ01000002">
    <property type="protein sequence ID" value="EAZ62890.1"/>
    <property type="molecule type" value="Genomic_DNA"/>
</dbReference>
<dbReference type="RefSeq" id="XP_001386913.1">
    <property type="nucleotide sequence ID" value="XM_001386876.1"/>
</dbReference>
<dbReference type="SMR" id="A3GHW9"/>
<dbReference type="FunCoup" id="A3GHW9">
    <property type="interactions" value="1066"/>
</dbReference>
<dbReference type="STRING" id="322104.A3GHW9"/>
<dbReference type="GeneID" id="4851868"/>
<dbReference type="KEGG" id="pic:PICST_81007"/>
<dbReference type="eggNOG" id="KOG0344">
    <property type="taxonomic scope" value="Eukaryota"/>
</dbReference>
<dbReference type="HOGENOM" id="CLU_003041_1_4_1"/>
<dbReference type="InParanoid" id="A3GHW9"/>
<dbReference type="OMA" id="EMAHSIM"/>
<dbReference type="OrthoDB" id="360161at2759"/>
<dbReference type="Proteomes" id="UP000002258">
    <property type="component" value="Chromosome 1"/>
</dbReference>
<dbReference type="GO" id="GO:0005829">
    <property type="term" value="C:cytosol"/>
    <property type="evidence" value="ECO:0007669"/>
    <property type="project" value="TreeGrafter"/>
</dbReference>
<dbReference type="GO" id="GO:0005730">
    <property type="term" value="C:nucleolus"/>
    <property type="evidence" value="ECO:0007669"/>
    <property type="project" value="UniProtKB-SubCell"/>
</dbReference>
<dbReference type="GO" id="GO:0032040">
    <property type="term" value="C:small-subunit processome"/>
    <property type="evidence" value="ECO:0007669"/>
    <property type="project" value="EnsemblFungi"/>
</dbReference>
<dbReference type="GO" id="GO:0005524">
    <property type="term" value="F:ATP binding"/>
    <property type="evidence" value="ECO:0007669"/>
    <property type="project" value="UniProtKB-KW"/>
</dbReference>
<dbReference type="GO" id="GO:0016887">
    <property type="term" value="F:ATP hydrolysis activity"/>
    <property type="evidence" value="ECO:0007669"/>
    <property type="project" value="RHEA"/>
</dbReference>
<dbReference type="GO" id="GO:0003723">
    <property type="term" value="F:RNA binding"/>
    <property type="evidence" value="ECO:0007669"/>
    <property type="project" value="UniProtKB-KW"/>
</dbReference>
<dbReference type="GO" id="GO:0003724">
    <property type="term" value="F:RNA helicase activity"/>
    <property type="evidence" value="ECO:0007669"/>
    <property type="project" value="UniProtKB-EC"/>
</dbReference>
<dbReference type="GO" id="GO:0000480">
    <property type="term" value="P:endonucleolytic cleavage in 5'-ETS of tricistronic rRNA transcript (SSU-rRNA, 5.8S rRNA, LSU-rRNA)"/>
    <property type="evidence" value="ECO:0007669"/>
    <property type="project" value="EnsemblFungi"/>
</dbReference>
<dbReference type="GO" id="GO:0000447">
    <property type="term" value="P:endonucleolytic cleavage in ITS1 to separate SSU-rRNA from 5.8S rRNA and LSU-rRNA from tricistronic rRNA transcript (SSU-rRNA, 5.8S rRNA, LSU-rRNA)"/>
    <property type="evidence" value="ECO:0007669"/>
    <property type="project" value="EnsemblFungi"/>
</dbReference>
<dbReference type="GO" id="GO:0000472">
    <property type="term" value="P:endonucleolytic cleavage to generate mature 5'-end of SSU-rRNA from (SSU-rRNA, 5.8S rRNA, LSU-rRNA)"/>
    <property type="evidence" value="ECO:0007669"/>
    <property type="project" value="EnsemblFungi"/>
</dbReference>
<dbReference type="GO" id="GO:0048254">
    <property type="term" value="P:snoRNA localization"/>
    <property type="evidence" value="ECO:0007669"/>
    <property type="project" value="EnsemblFungi"/>
</dbReference>
<dbReference type="CDD" id="cd17957">
    <property type="entry name" value="DEADc_DDX52"/>
    <property type="match status" value="1"/>
</dbReference>
<dbReference type="CDD" id="cd18787">
    <property type="entry name" value="SF2_C_DEAD"/>
    <property type="match status" value="1"/>
</dbReference>
<dbReference type="FunFam" id="3.40.50.300:FF:000759">
    <property type="entry name" value="probable ATP-dependent RNA helicase DDX52"/>
    <property type="match status" value="1"/>
</dbReference>
<dbReference type="Gene3D" id="3.40.50.300">
    <property type="entry name" value="P-loop containing nucleotide triphosphate hydrolases"/>
    <property type="match status" value="2"/>
</dbReference>
<dbReference type="InterPro" id="IPR044764">
    <property type="entry name" value="DDX52/Rok1_DEADc"/>
</dbReference>
<dbReference type="InterPro" id="IPR011545">
    <property type="entry name" value="DEAD/DEAH_box_helicase_dom"/>
</dbReference>
<dbReference type="InterPro" id="IPR050079">
    <property type="entry name" value="DEAD_box_RNA_helicase"/>
</dbReference>
<dbReference type="InterPro" id="IPR014001">
    <property type="entry name" value="Helicase_ATP-bd"/>
</dbReference>
<dbReference type="InterPro" id="IPR001650">
    <property type="entry name" value="Helicase_C-like"/>
</dbReference>
<dbReference type="InterPro" id="IPR027417">
    <property type="entry name" value="P-loop_NTPase"/>
</dbReference>
<dbReference type="InterPro" id="IPR000629">
    <property type="entry name" value="RNA-helicase_DEAD-box_CS"/>
</dbReference>
<dbReference type="PANTHER" id="PTHR47959">
    <property type="entry name" value="ATP-DEPENDENT RNA HELICASE RHLE-RELATED"/>
    <property type="match status" value="1"/>
</dbReference>
<dbReference type="PANTHER" id="PTHR47959:SF15">
    <property type="entry name" value="RNA HELICASE"/>
    <property type="match status" value="1"/>
</dbReference>
<dbReference type="Pfam" id="PF00270">
    <property type="entry name" value="DEAD"/>
    <property type="match status" value="1"/>
</dbReference>
<dbReference type="Pfam" id="PF00271">
    <property type="entry name" value="Helicase_C"/>
    <property type="match status" value="1"/>
</dbReference>
<dbReference type="SMART" id="SM00487">
    <property type="entry name" value="DEXDc"/>
    <property type="match status" value="1"/>
</dbReference>
<dbReference type="SMART" id="SM00490">
    <property type="entry name" value="HELICc"/>
    <property type="match status" value="1"/>
</dbReference>
<dbReference type="SUPFAM" id="SSF52540">
    <property type="entry name" value="P-loop containing nucleoside triphosphate hydrolases"/>
    <property type="match status" value="1"/>
</dbReference>
<dbReference type="PROSITE" id="PS00039">
    <property type="entry name" value="DEAD_ATP_HELICASE"/>
    <property type="match status" value="1"/>
</dbReference>
<dbReference type="PROSITE" id="PS51192">
    <property type="entry name" value="HELICASE_ATP_BIND_1"/>
    <property type="match status" value="1"/>
</dbReference>
<dbReference type="PROSITE" id="PS51194">
    <property type="entry name" value="HELICASE_CTER"/>
    <property type="match status" value="1"/>
</dbReference>
<dbReference type="PROSITE" id="PS51195">
    <property type="entry name" value="Q_MOTIF"/>
    <property type="match status" value="1"/>
</dbReference>
<comment type="function">
    <text>ATP-dependent RNA helicase involved in 40S ribosomal subunit biogenesis. Required for the processing and cleavage of 35S pre-rRNA at sites A0, A1, and A2, leading to mature 18S rRNA.</text>
</comment>
<comment type="catalytic activity">
    <reaction>
        <text>ATP + H2O = ADP + phosphate + H(+)</text>
        <dbReference type="Rhea" id="RHEA:13065"/>
        <dbReference type="ChEBI" id="CHEBI:15377"/>
        <dbReference type="ChEBI" id="CHEBI:15378"/>
        <dbReference type="ChEBI" id="CHEBI:30616"/>
        <dbReference type="ChEBI" id="CHEBI:43474"/>
        <dbReference type="ChEBI" id="CHEBI:456216"/>
        <dbReference type="EC" id="3.6.4.13"/>
    </reaction>
</comment>
<comment type="subunit">
    <text evidence="1">Interacts with the U3 snoRNA and is associated with the 90S and 40S pre-ribosomes.</text>
</comment>
<comment type="subcellular location">
    <subcellularLocation>
        <location evidence="1">Nucleus</location>
        <location evidence="1">Nucleolus</location>
    </subcellularLocation>
</comment>
<comment type="domain">
    <text>The Q motif is unique to and characteristic of the DEAD box family of RNA helicases and controls ATP binding and hydrolysis.</text>
</comment>
<comment type="similarity">
    <text evidence="5">Belongs to the DEAD box helicase family. DDX52/ROK1 subfamily.</text>
</comment>